<keyword id="KW-0963">Cytoplasm</keyword>
<keyword id="KW-0521">NADP</keyword>
<keyword id="KW-0560">Oxidoreductase</keyword>
<keyword id="KW-0566">Pantothenate biosynthesis</keyword>
<proteinExistence type="inferred from homology"/>
<protein>
    <recommendedName>
        <fullName evidence="1">2-dehydropantoate 2-reductase</fullName>
        <ecNumber evidence="1">1.1.1.169</ecNumber>
    </recommendedName>
    <alternativeName>
        <fullName evidence="1">Ketopantoate reductase</fullName>
        <shortName evidence="1">KPR</shortName>
    </alternativeName>
</protein>
<reference key="1">
    <citation type="journal article" date="2002" name="Proc. Natl. Acad. Sci. U.S.A.">
        <title>Genome sequence of a serotype M3 strain of group A Streptococcus: phage-encoded toxins, the high-virulence phenotype, and clone emergence.</title>
        <authorList>
            <person name="Beres S.B."/>
            <person name="Sylva G.L."/>
            <person name="Barbian K.D."/>
            <person name="Lei B."/>
            <person name="Hoff J.S."/>
            <person name="Mammarella N.D."/>
            <person name="Liu M.-Y."/>
            <person name="Smoot J.C."/>
            <person name="Porcella S.F."/>
            <person name="Parkins L.D."/>
            <person name="Campbell D.S."/>
            <person name="Smith T.M."/>
            <person name="McCormick J.K."/>
            <person name="Leung D.Y.M."/>
            <person name="Schlievert P.M."/>
            <person name="Musser J.M."/>
        </authorList>
    </citation>
    <scope>NUCLEOTIDE SEQUENCE [LARGE SCALE GENOMIC DNA]</scope>
    <source>
        <strain>ATCC BAA-595 / MGAS315</strain>
    </source>
</reference>
<dbReference type="EC" id="1.1.1.169" evidence="1"/>
<dbReference type="EMBL" id="AE014074">
    <property type="protein sequence ID" value="AAM79184.1"/>
    <property type="molecule type" value="Genomic_DNA"/>
</dbReference>
<dbReference type="RefSeq" id="WP_010922156.1">
    <property type="nucleotide sequence ID" value="NC_004070.1"/>
</dbReference>
<dbReference type="SMR" id="P0DC92"/>
<dbReference type="KEGG" id="spg:SpyM3_0577"/>
<dbReference type="HOGENOM" id="CLU_031468_0_0_9"/>
<dbReference type="UniPathway" id="UPA00028">
    <property type="reaction ID" value="UER00004"/>
</dbReference>
<dbReference type="Proteomes" id="UP000000564">
    <property type="component" value="Chromosome"/>
</dbReference>
<dbReference type="GO" id="GO:0005737">
    <property type="term" value="C:cytoplasm"/>
    <property type="evidence" value="ECO:0007669"/>
    <property type="project" value="UniProtKB-SubCell"/>
</dbReference>
<dbReference type="GO" id="GO:0008677">
    <property type="term" value="F:2-dehydropantoate 2-reductase activity"/>
    <property type="evidence" value="ECO:0007669"/>
    <property type="project" value="UniProtKB-EC"/>
</dbReference>
<dbReference type="GO" id="GO:0050661">
    <property type="term" value="F:NADP binding"/>
    <property type="evidence" value="ECO:0007669"/>
    <property type="project" value="TreeGrafter"/>
</dbReference>
<dbReference type="GO" id="GO:0015940">
    <property type="term" value="P:pantothenate biosynthetic process"/>
    <property type="evidence" value="ECO:0007669"/>
    <property type="project" value="UniProtKB-UniPathway"/>
</dbReference>
<dbReference type="Gene3D" id="1.10.1040.10">
    <property type="entry name" value="N-(1-d-carboxylethyl)-l-norvaline Dehydrogenase, domain 2"/>
    <property type="match status" value="1"/>
</dbReference>
<dbReference type="Gene3D" id="3.40.50.720">
    <property type="entry name" value="NAD(P)-binding Rossmann-like Domain"/>
    <property type="match status" value="1"/>
</dbReference>
<dbReference type="InterPro" id="IPR008927">
    <property type="entry name" value="6-PGluconate_DH-like_C_sf"/>
</dbReference>
<dbReference type="InterPro" id="IPR013328">
    <property type="entry name" value="6PGD_dom2"/>
</dbReference>
<dbReference type="InterPro" id="IPR003710">
    <property type="entry name" value="ApbA"/>
</dbReference>
<dbReference type="InterPro" id="IPR050838">
    <property type="entry name" value="Ketopantoate_reductase"/>
</dbReference>
<dbReference type="InterPro" id="IPR013752">
    <property type="entry name" value="KPA_reductase"/>
</dbReference>
<dbReference type="InterPro" id="IPR013332">
    <property type="entry name" value="KPR_N"/>
</dbReference>
<dbReference type="InterPro" id="IPR036291">
    <property type="entry name" value="NAD(P)-bd_dom_sf"/>
</dbReference>
<dbReference type="NCBIfam" id="TIGR00745">
    <property type="entry name" value="apbA_panE"/>
    <property type="match status" value="1"/>
</dbReference>
<dbReference type="NCBIfam" id="NF005088">
    <property type="entry name" value="PRK06522.1-2"/>
    <property type="match status" value="1"/>
</dbReference>
<dbReference type="PANTHER" id="PTHR43765:SF2">
    <property type="entry name" value="2-DEHYDROPANTOATE 2-REDUCTASE"/>
    <property type="match status" value="1"/>
</dbReference>
<dbReference type="PANTHER" id="PTHR43765">
    <property type="entry name" value="2-DEHYDROPANTOATE 2-REDUCTASE-RELATED"/>
    <property type="match status" value="1"/>
</dbReference>
<dbReference type="Pfam" id="PF02558">
    <property type="entry name" value="ApbA"/>
    <property type="match status" value="1"/>
</dbReference>
<dbReference type="Pfam" id="PF08546">
    <property type="entry name" value="ApbA_C"/>
    <property type="match status" value="1"/>
</dbReference>
<dbReference type="SUPFAM" id="SSF48179">
    <property type="entry name" value="6-phosphogluconate dehydrogenase C-terminal domain-like"/>
    <property type="match status" value="1"/>
</dbReference>
<dbReference type="SUPFAM" id="SSF51735">
    <property type="entry name" value="NAD(P)-binding Rossmann-fold domains"/>
    <property type="match status" value="1"/>
</dbReference>
<gene>
    <name type="primary">apbA</name>
    <name type="ordered locus">SpyM3_0577</name>
</gene>
<comment type="function">
    <text evidence="1">Catalyzes the NADPH-dependent reduction of ketopantoate into pantoic acid.</text>
</comment>
<comment type="catalytic activity">
    <reaction evidence="1">
        <text>(R)-pantoate + NADP(+) = 2-dehydropantoate + NADPH + H(+)</text>
        <dbReference type="Rhea" id="RHEA:16233"/>
        <dbReference type="ChEBI" id="CHEBI:11561"/>
        <dbReference type="ChEBI" id="CHEBI:15378"/>
        <dbReference type="ChEBI" id="CHEBI:15980"/>
        <dbReference type="ChEBI" id="CHEBI:57783"/>
        <dbReference type="ChEBI" id="CHEBI:58349"/>
        <dbReference type="EC" id="1.1.1.169"/>
    </reaction>
</comment>
<comment type="pathway">
    <text evidence="1">Cofactor biosynthesis; (R)-pantothenate biosynthesis; (R)-pantoate from 3-methyl-2-oxobutanoate: step 2/2.</text>
</comment>
<comment type="subcellular location">
    <subcellularLocation>
        <location evidence="1">Cytoplasm</location>
    </subcellularLocation>
</comment>
<comment type="similarity">
    <text evidence="2">Belongs to the ketopantoate reductase family.</text>
</comment>
<evidence type="ECO:0000250" key="1">
    <source>
        <dbReference type="UniProtKB" id="P0A9J4"/>
    </source>
</evidence>
<evidence type="ECO:0000305" key="2"/>
<accession>P0DC92</accession>
<accession>P65667</accession>
<accession>Q9A0B3</accession>
<feature type="chain" id="PRO_0000157319" description="2-dehydropantoate 2-reductase">
    <location>
        <begin position="1"/>
        <end position="307"/>
    </location>
</feature>
<feature type="active site" description="Proton donor" evidence="1">
    <location>
        <position position="184"/>
    </location>
</feature>
<feature type="binding site" evidence="1">
    <location>
        <begin position="7"/>
        <end position="12"/>
    </location>
    <ligand>
        <name>NADP(+)</name>
        <dbReference type="ChEBI" id="CHEBI:58349"/>
    </ligand>
</feature>
<feature type="binding site" evidence="1">
    <location>
        <position position="102"/>
    </location>
    <ligand>
        <name>NADP(+)</name>
        <dbReference type="ChEBI" id="CHEBI:58349"/>
    </ligand>
</feature>
<feature type="binding site" evidence="1">
    <location>
        <position position="102"/>
    </location>
    <ligand>
        <name>substrate</name>
    </ligand>
</feature>
<feature type="binding site" evidence="1">
    <location>
        <position position="128"/>
    </location>
    <ligand>
        <name>NADP(+)</name>
        <dbReference type="ChEBI" id="CHEBI:58349"/>
    </ligand>
</feature>
<feature type="binding site" evidence="1">
    <location>
        <position position="188"/>
    </location>
    <ligand>
        <name>substrate</name>
    </ligand>
</feature>
<feature type="binding site" evidence="1">
    <location>
        <position position="192"/>
    </location>
    <ligand>
        <name>substrate</name>
    </ligand>
</feature>
<feature type="binding site" evidence="1">
    <location>
        <position position="255"/>
    </location>
    <ligand>
        <name>substrate</name>
    </ligand>
</feature>
<feature type="binding site" evidence="1">
    <location>
        <position position="268"/>
    </location>
    <ligand>
        <name>NADP(+)</name>
        <dbReference type="ChEBI" id="CHEBI:58349"/>
    </ligand>
</feature>
<sequence length="307" mass="33829">MLVYIAGSGAMGCRFGYQISKTNNDVILLDNWEDHINAIKENGLVVTGDVEETVKLPIMKPTEATQEADLIILFTKAMQLPQMLQDIKGIIGKETKVLCLLNGLGHEDVIRQYIPEHNILMGVTVWTAGLEGPGRAHLQGVGALNLQSMDPSNQEAGHQVADLLNEANLNATYDENVVPNIWRKACVNGTMNSTCALLDCTIGELFASEDGLKMVKEIIHEFVIVGQAEGVELNEEEITQYVMDTSVKAAHHYPSMHQDLVQNHRLTEIDFINGAVNTKGEKLGINTPYCRMITELVHAKEAVLNIQ</sequence>
<organism>
    <name type="scientific">Streptococcus pyogenes serotype M3 (strain ATCC BAA-595 / MGAS315)</name>
    <dbReference type="NCBI Taxonomy" id="198466"/>
    <lineage>
        <taxon>Bacteria</taxon>
        <taxon>Bacillati</taxon>
        <taxon>Bacillota</taxon>
        <taxon>Bacilli</taxon>
        <taxon>Lactobacillales</taxon>
        <taxon>Streptococcaceae</taxon>
        <taxon>Streptococcus</taxon>
    </lineage>
</organism>
<name>PANE_STRP3</name>